<keyword id="KW-0997">Cell inner membrane</keyword>
<keyword id="KW-1003">Cell membrane</keyword>
<keyword id="KW-0472">Membrane</keyword>
<keyword id="KW-0520">NAD</keyword>
<keyword id="KW-0874">Quinone</keyword>
<keyword id="KW-1185">Reference proteome</keyword>
<keyword id="KW-1278">Translocase</keyword>
<keyword id="KW-0812">Transmembrane</keyword>
<keyword id="KW-1133">Transmembrane helix</keyword>
<keyword id="KW-0813">Transport</keyword>
<keyword id="KW-0830">Ubiquinone</keyword>
<sequence>MLQNSELLQEYLPIAIFFGIAVLLSVLIMILPNLLSTKKYNKDKLEPYECGFEPFSDARSKFDIRFYLVAILFIIFDLEIAFLVPWAISLNTIGKMGFFSMMFFLFVLIIGFIYEWTKGALDW</sequence>
<gene>
    <name evidence="1" type="primary">nuoA</name>
    <name type="ordered locus">RP357</name>
</gene>
<evidence type="ECO:0000255" key="1">
    <source>
        <dbReference type="HAMAP-Rule" id="MF_01394"/>
    </source>
</evidence>
<feature type="chain" id="PRO_0000117876" description="NADH-quinone oxidoreductase subunit A">
    <location>
        <begin position="1"/>
        <end position="123"/>
    </location>
</feature>
<feature type="transmembrane region" description="Helical" evidence="1">
    <location>
        <begin position="11"/>
        <end position="31"/>
    </location>
</feature>
<feature type="transmembrane region" description="Helical" evidence="1">
    <location>
        <begin position="68"/>
        <end position="88"/>
    </location>
</feature>
<feature type="transmembrane region" description="Helical" evidence="1">
    <location>
        <begin position="93"/>
        <end position="113"/>
    </location>
</feature>
<organism>
    <name type="scientific">Rickettsia prowazekii (strain Madrid E)</name>
    <dbReference type="NCBI Taxonomy" id="272947"/>
    <lineage>
        <taxon>Bacteria</taxon>
        <taxon>Pseudomonadati</taxon>
        <taxon>Pseudomonadota</taxon>
        <taxon>Alphaproteobacteria</taxon>
        <taxon>Rickettsiales</taxon>
        <taxon>Rickettsiaceae</taxon>
        <taxon>Rickettsieae</taxon>
        <taxon>Rickettsia</taxon>
        <taxon>typhus group</taxon>
    </lineage>
</organism>
<proteinExistence type="inferred from homology"/>
<accession>Q9ZDH1</accession>
<comment type="function">
    <text evidence="1">NDH-1 shuttles electrons from NADH, via FMN and iron-sulfur (Fe-S) centers, to quinones in the respiratory chain. The immediate electron acceptor for the enzyme in this species is believed to be ubiquinone. Couples the redox reaction to proton translocation (for every two electrons transferred, four hydrogen ions are translocated across the cytoplasmic membrane), and thus conserves the redox energy in a proton gradient.</text>
</comment>
<comment type="catalytic activity">
    <reaction evidence="1">
        <text>a quinone + NADH + 5 H(+)(in) = a quinol + NAD(+) + 4 H(+)(out)</text>
        <dbReference type="Rhea" id="RHEA:57888"/>
        <dbReference type="ChEBI" id="CHEBI:15378"/>
        <dbReference type="ChEBI" id="CHEBI:24646"/>
        <dbReference type="ChEBI" id="CHEBI:57540"/>
        <dbReference type="ChEBI" id="CHEBI:57945"/>
        <dbReference type="ChEBI" id="CHEBI:132124"/>
    </reaction>
</comment>
<comment type="subunit">
    <text evidence="1">NDH-1 is composed of 14 different subunits. Subunits NuoA, H, J, K, L, M, N constitute the membrane sector of the complex.</text>
</comment>
<comment type="subcellular location">
    <subcellularLocation>
        <location evidence="1">Cell inner membrane</location>
        <topology evidence="1">Multi-pass membrane protein</topology>
    </subcellularLocation>
</comment>
<comment type="similarity">
    <text evidence="1">Belongs to the complex I subunit 3 family.</text>
</comment>
<protein>
    <recommendedName>
        <fullName evidence="1">NADH-quinone oxidoreductase subunit A</fullName>
        <ecNumber evidence="1">7.1.1.-</ecNumber>
    </recommendedName>
    <alternativeName>
        <fullName evidence="1">NADH dehydrogenase I subunit A</fullName>
    </alternativeName>
    <alternativeName>
        <fullName evidence="1">NDH-1 subunit A</fullName>
    </alternativeName>
    <alternativeName>
        <fullName evidence="1">NUO1</fullName>
    </alternativeName>
</protein>
<reference key="1">
    <citation type="journal article" date="1998" name="Nature">
        <title>The genome sequence of Rickettsia prowazekii and the origin of mitochondria.</title>
        <authorList>
            <person name="Andersson S.G.E."/>
            <person name="Zomorodipour A."/>
            <person name="Andersson J.O."/>
            <person name="Sicheritz-Ponten T."/>
            <person name="Alsmark U.C.M."/>
            <person name="Podowski R.M."/>
            <person name="Naeslund A.K."/>
            <person name="Eriksson A.-S."/>
            <person name="Winkler H.H."/>
            <person name="Kurland C.G."/>
        </authorList>
    </citation>
    <scope>NUCLEOTIDE SEQUENCE [LARGE SCALE GENOMIC DNA]</scope>
    <source>
        <strain>Madrid E</strain>
    </source>
</reference>
<name>NUOA_RICPR</name>
<dbReference type="EC" id="7.1.1.-" evidence="1"/>
<dbReference type="EMBL" id="AJ235271">
    <property type="protein sequence ID" value="CAA14817.1"/>
    <property type="molecule type" value="Genomic_DNA"/>
</dbReference>
<dbReference type="PIR" id="G71692">
    <property type="entry name" value="G71692"/>
</dbReference>
<dbReference type="RefSeq" id="NP_220741.1">
    <property type="nucleotide sequence ID" value="NC_000963.1"/>
</dbReference>
<dbReference type="RefSeq" id="WP_004597494.1">
    <property type="nucleotide sequence ID" value="NC_000963.1"/>
</dbReference>
<dbReference type="SMR" id="Q9ZDH1"/>
<dbReference type="STRING" id="272947.gene:17555437"/>
<dbReference type="EnsemblBacteria" id="CAA14817">
    <property type="protein sequence ID" value="CAA14817"/>
    <property type="gene ID" value="CAA14817"/>
</dbReference>
<dbReference type="KEGG" id="rpr:RP357"/>
<dbReference type="PATRIC" id="fig|272947.5.peg.367"/>
<dbReference type="eggNOG" id="COG0838">
    <property type="taxonomic scope" value="Bacteria"/>
</dbReference>
<dbReference type="HOGENOM" id="CLU_119549_3_1_5"/>
<dbReference type="OrthoDB" id="9791970at2"/>
<dbReference type="Proteomes" id="UP000002480">
    <property type="component" value="Chromosome"/>
</dbReference>
<dbReference type="GO" id="GO:0030964">
    <property type="term" value="C:NADH dehydrogenase complex"/>
    <property type="evidence" value="ECO:0007669"/>
    <property type="project" value="TreeGrafter"/>
</dbReference>
<dbReference type="GO" id="GO:0005886">
    <property type="term" value="C:plasma membrane"/>
    <property type="evidence" value="ECO:0007669"/>
    <property type="project" value="UniProtKB-SubCell"/>
</dbReference>
<dbReference type="GO" id="GO:0008137">
    <property type="term" value="F:NADH dehydrogenase (ubiquinone) activity"/>
    <property type="evidence" value="ECO:0007669"/>
    <property type="project" value="InterPro"/>
</dbReference>
<dbReference type="GO" id="GO:0050136">
    <property type="term" value="F:NADH:ubiquinone reductase (non-electrogenic) activity"/>
    <property type="evidence" value="ECO:0007669"/>
    <property type="project" value="UniProtKB-UniRule"/>
</dbReference>
<dbReference type="GO" id="GO:0048038">
    <property type="term" value="F:quinone binding"/>
    <property type="evidence" value="ECO:0007669"/>
    <property type="project" value="UniProtKB-KW"/>
</dbReference>
<dbReference type="FunFam" id="1.20.58.1610:FF:000004">
    <property type="entry name" value="NADH-quinone oxidoreductase subunit A"/>
    <property type="match status" value="1"/>
</dbReference>
<dbReference type="Gene3D" id="1.20.58.1610">
    <property type="entry name" value="NADH:ubiquinone/plastoquinone oxidoreductase, chain 3"/>
    <property type="match status" value="1"/>
</dbReference>
<dbReference type="HAMAP" id="MF_01394">
    <property type="entry name" value="NDH1_NuoA"/>
    <property type="match status" value="1"/>
</dbReference>
<dbReference type="InterPro" id="IPR023043">
    <property type="entry name" value="NAD(P)H_OxRDtase_bac/plastid"/>
</dbReference>
<dbReference type="InterPro" id="IPR000440">
    <property type="entry name" value="NADH_UbQ/plastoQ_OxRdtase_su3"/>
</dbReference>
<dbReference type="InterPro" id="IPR038430">
    <property type="entry name" value="NDAH_ubi_oxred_su3_sf"/>
</dbReference>
<dbReference type="PANTHER" id="PTHR11058">
    <property type="entry name" value="NADH-UBIQUINONE OXIDOREDUCTASE CHAIN 3"/>
    <property type="match status" value="1"/>
</dbReference>
<dbReference type="PANTHER" id="PTHR11058:SF9">
    <property type="entry name" value="NADH-UBIQUINONE OXIDOREDUCTASE CHAIN 3"/>
    <property type="match status" value="1"/>
</dbReference>
<dbReference type="Pfam" id="PF00507">
    <property type="entry name" value="Oxidored_q4"/>
    <property type="match status" value="1"/>
</dbReference>